<comment type="function">
    <text evidence="4">Mediates visceral muscle contractile activity (myotropic activity).</text>
</comment>
<comment type="subcellular location">
    <subcellularLocation>
        <location evidence="2">Secreted</location>
    </subcellularLocation>
</comment>
<comment type="tissue specificity">
    <text evidence="2">Abdominal perisympathetic organs.</text>
</comment>
<comment type="mass spectrometry" mass="1159.6" method="MALDI" evidence="2">
    <molecule>Periviscerokinin-2.1</molecule>
</comment>
<comment type="mass spectrometry" mass="1102.6" method="MALDI" evidence="2">
    <molecule>Periviscerokinin-2.2</molecule>
</comment>
<comment type="similarity">
    <text evidence="1">Belongs to the periviscerokinin family.</text>
</comment>
<organism>
    <name type="scientific">Deropeltis erythrocephala</name>
    <name type="common">Black velvet roach</name>
    <dbReference type="NCBI Taxonomy" id="303918"/>
    <lineage>
        <taxon>Eukaryota</taxon>
        <taxon>Metazoa</taxon>
        <taxon>Ecdysozoa</taxon>
        <taxon>Arthropoda</taxon>
        <taxon>Hexapoda</taxon>
        <taxon>Insecta</taxon>
        <taxon>Pterygota</taxon>
        <taxon>Neoptera</taxon>
        <taxon>Polyneoptera</taxon>
        <taxon>Dictyoptera</taxon>
        <taxon>Blattodea</taxon>
        <taxon>Blattoidea</taxon>
        <taxon>Blattidae</taxon>
        <taxon>Blattinae</taxon>
        <taxon>Deropeltis</taxon>
    </lineage>
</organism>
<name>PVK2_DERER</name>
<sequence length="12" mass="1160">GGSSGLISMPRV</sequence>
<feature type="peptide" id="PRO_0000023621" description="Periviscerokinin-2.1">
    <location>
        <begin position="1"/>
        <end position="12"/>
    </location>
</feature>
<feature type="peptide" id="PRO_0000023622" description="Periviscerokinin-2.2">
    <location>
        <begin position="2"/>
        <end position="12"/>
    </location>
</feature>
<feature type="modified residue" description="Valine amide" evidence="2 3">
    <location>
        <position position="12"/>
    </location>
</feature>
<keyword id="KW-0027">Amidation</keyword>
<keyword id="KW-0903">Direct protein sequencing</keyword>
<keyword id="KW-0527">Neuropeptide</keyword>
<keyword id="KW-0964">Secreted</keyword>
<dbReference type="GO" id="GO:0005576">
    <property type="term" value="C:extracellular region"/>
    <property type="evidence" value="ECO:0007669"/>
    <property type="project" value="UniProtKB-SubCell"/>
</dbReference>
<dbReference type="GO" id="GO:0007218">
    <property type="term" value="P:neuropeptide signaling pathway"/>
    <property type="evidence" value="ECO:0007669"/>
    <property type="project" value="UniProtKB-KW"/>
</dbReference>
<dbReference type="InterPro" id="IPR013231">
    <property type="entry name" value="Periviscerokinin"/>
</dbReference>
<dbReference type="Pfam" id="PF08259">
    <property type="entry name" value="Periviscerokin"/>
    <property type="match status" value="1"/>
</dbReference>
<protein>
    <recommendedName>
        <fullName>Periviscerokinin-2.1</fullName>
        <shortName>PVK-2.1</shortName>
    </recommendedName>
    <alternativeName>
        <fullName>Periviscerokinin-3</fullName>
        <shortName>DerEr-PVK-3</shortName>
    </alternativeName>
    <component>
        <recommendedName>
            <fullName>Periviscerokinin-2.2</fullName>
            <shortName>PVK-2.2</shortName>
        </recommendedName>
        <alternativeName>
            <fullName>Periviscerokinin-2</fullName>
            <shortName>DerEr-PVK-2</shortName>
        </alternativeName>
    </component>
</protein>
<accession>P84380</accession>
<accession>P84429</accession>
<evidence type="ECO:0000255" key="1"/>
<evidence type="ECO:0000269" key="2">
    <source>
    </source>
</evidence>
<evidence type="ECO:0000269" key="3">
    <source>
    </source>
</evidence>
<evidence type="ECO:0000305" key="4"/>
<proteinExistence type="evidence at protein level"/>
<reference evidence="4" key="1">
    <citation type="journal article" date="2005" name="Peptides">
        <title>Peptidomics of neurohemal organs from species of the cockroach family Blattidae: how do neuropeptides of closely related species differ?</title>
        <authorList>
            <person name="Predel R."/>
            <person name="Gaede G."/>
        </authorList>
    </citation>
    <scope>PROTEIN SEQUENCE</scope>
    <scope>SUBCELLULAR LOCATION</scope>
    <scope>TISSUE SPECIFICITY</scope>
    <scope>MASS SPECTROMETRY</scope>
    <scope>AMIDATION AT VAL-12</scope>
    <source>
        <tissue evidence="2">Abdominal perisympathetic organs</tissue>
    </source>
</reference>
<reference key="2">
    <citation type="journal article" date="2009" name="BMC Evol. Biol.">
        <title>A proteomic approach for studying insect phylogeny: CAPA peptides of ancient insect taxa (Dictyoptera, Blattoptera) as a test case.</title>
        <authorList>
            <person name="Roth S."/>
            <person name="Fromm B."/>
            <person name="Gaede G."/>
            <person name="Predel R."/>
        </authorList>
    </citation>
    <scope>PROTEIN SEQUENCE</scope>
    <scope>AMIDATION AT VAL-12</scope>
    <source>
        <tissue>Abdominal perisympathetic organs</tissue>
    </source>
</reference>